<evidence type="ECO:0000250" key="1"/>
<evidence type="ECO:0000269" key="2">
    <source>
    </source>
</evidence>
<evidence type="ECO:0000305" key="3"/>
<protein>
    <recommendedName>
        <fullName>Chalcone--flavanone isomerase 1B-2</fullName>
        <shortName>Chalcone isomerase 1B-2</shortName>
        <ecNumber>5.5.1.6</ecNumber>
    </recommendedName>
</protein>
<name>CF1B2_SOYBN</name>
<keyword id="KW-0284">Flavonoid biosynthesis</keyword>
<keyword id="KW-0413">Isomerase</keyword>
<keyword id="KW-1185">Reference proteome</keyword>
<sequence>MATPASITNVTVEFLQFPALVTPPASTKSYFLGGAGVRGLNIQEEFVKFTGIGVYLEDKAVSSLGAKWKGKSAAELLDSLDFYRDIIKGPFEKLIRGSKLRTLDGREYVRKVSENCVAHMESVGTYSEAEEKAIEEFRNAFKDQNFPPGSTVFYKQSPTGTLGLSFSKDETIPEHEHAVIDNKPLSEAVLETMIGEIPVSPALKESLATRFHQFFKELEANPNIEN</sequence>
<dbReference type="EC" id="5.5.1.6"/>
<dbReference type="EMBL" id="AY595419">
    <property type="protein sequence ID" value="AAT94364.1"/>
    <property type="molecule type" value="mRNA"/>
</dbReference>
<dbReference type="RefSeq" id="NP_001236097.1">
    <property type="nucleotide sequence ID" value="NM_001249168.1"/>
</dbReference>
<dbReference type="SMR" id="Q53B70"/>
<dbReference type="STRING" id="3847.Q53B70"/>
<dbReference type="PaxDb" id="3847-GLYMA10G43850.1"/>
<dbReference type="GeneID" id="100037455"/>
<dbReference type="KEGG" id="gmx:100037455"/>
<dbReference type="eggNOG" id="ENOG502QR5P">
    <property type="taxonomic scope" value="Eukaryota"/>
</dbReference>
<dbReference type="InParanoid" id="Q53B70"/>
<dbReference type="OrthoDB" id="1903537at2759"/>
<dbReference type="BRENDA" id="5.5.1.6">
    <property type="organism ID" value="2483"/>
</dbReference>
<dbReference type="UniPathway" id="UPA00154"/>
<dbReference type="Proteomes" id="UP000008827">
    <property type="component" value="Unplaced"/>
</dbReference>
<dbReference type="GO" id="GO:0045430">
    <property type="term" value="F:chalcone isomerase activity"/>
    <property type="evidence" value="ECO:0007669"/>
    <property type="project" value="UniProtKB-EC"/>
</dbReference>
<dbReference type="GO" id="GO:0009813">
    <property type="term" value="P:flavonoid biosynthetic process"/>
    <property type="evidence" value="ECO:0007669"/>
    <property type="project" value="UniProtKB-UniPathway"/>
</dbReference>
<dbReference type="Gene3D" id="1.10.890.20">
    <property type="match status" value="1"/>
</dbReference>
<dbReference type="Gene3D" id="3.50.70.10">
    <property type="match status" value="1"/>
</dbReference>
<dbReference type="InterPro" id="IPR044164">
    <property type="entry name" value="CFI"/>
</dbReference>
<dbReference type="InterPro" id="IPR016087">
    <property type="entry name" value="Chalcone_isomerase"/>
</dbReference>
<dbReference type="InterPro" id="IPR016088">
    <property type="entry name" value="Chalcone_isomerase_3-sand"/>
</dbReference>
<dbReference type="InterPro" id="IPR016089">
    <property type="entry name" value="Chalcone_isomerase_bundle_sf"/>
</dbReference>
<dbReference type="InterPro" id="IPR036298">
    <property type="entry name" value="Chalcone_isomerase_sf"/>
</dbReference>
<dbReference type="PANTHER" id="PTHR28039:SF9">
    <property type="entry name" value="CHALCONE--FLAVANONE ISOMERASE 1B-1"/>
    <property type="match status" value="1"/>
</dbReference>
<dbReference type="PANTHER" id="PTHR28039">
    <property type="entry name" value="CHALCONE--FLAVONONE ISOMERASE 1-RELATED"/>
    <property type="match status" value="1"/>
</dbReference>
<dbReference type="Pfam" id="PF02431">
    <property type="entry name" value="Chalcone"/>
    <property type="match status" value="1"/>
</dbReference>
<dbReference type="SUPFAM" id="SSF54626">
    <property type="entry name" value="Chalcone isomerase"/>
    <property type="match status" value="1"/>
</dbReference>
<proteinExistence type="evidence at transcript level"/>
<feature type="chain" id="PRO_0000300852" description="Chalcone--flavanone isomerase 1B-2">
    <location>
        <begin position="1"/>
        <end position="226"/>
    </location>
</feature>
<feature type="binding site" evidence="1">
    <location>
        <position position="50"/>
    </location>
    <ligand>
        <name>substrate</name>
    </ligand>
</feature>
<feature type="binding site" evidence="1">
    <location>
        <position position="115"/>
    </location>
    <ligand>
        <name>substrate</name>
    </ligand>
</feature>
<feature type="binding site" evidence="1">
    <location>
        <position position="192"/>
    </location>
    <ligand>
        <name>substrate</name>
    </ligand>
</feature>
<feature type="site" description="Important for catalytic activity" evidence="1">
    <location>
        <position position="108"/>
    </location>
</feature>
<comment type="function">
    <text evidence="2">Catalyzes the intramolecular cyclization of bicyclic chalcones into tricyclic (S)-flavanones. Responsible for the isomerization of 4,2',4',6'-tetrahydroxychalcone (also termed chalcone) into naringenin.</text>
</comment>
<comment type="catalytic activity">
    <reaction>
        <text>a chalcone = a flavanone.</text>
        <dbReference type="EC" id="5.5.1.6"/>
    </reaction>
</comment>
<comment type="pathway">
    <text>Secondary metabolite biosynthesis; flavonoid biosynthesis.</text>
</comment>
<comment type="tissue specificity">
    <text evidence="2">Expressed in roots, shoots, flowers and seeds.</text>
</comment>
<comment type="induction">
    <text evidence="2">In roots by B.japonicum.</text>
</comment>
<comment type="miscellaneous">
    <text>Part of the biosynthetic pathway for all classes of flavonoids, a large class of secondary plant metabolites, many of which are brightly colored.</text>
</comment>
<comment type="similarity">
    <text evidence="3">Belongs to the chalcone isomerase family.</text>
</comment>
<gene>
    <name type="primary">CHI1B2</name>
</gene>
<accession>Q53B70</accession>
<reference key="1">
    <citation type="journal article" date="2005" name="Plant Physiol.">
        <title>Partial reconstruction of flavonoid and isoflavonoid biosynthesis in yeast using soybean type I and type II chalcone isomerases.</title>
        <authorList>
            <person name="Ralston L."/>
            <person name="Subramanian S."/>
            <person name="Matsuno M."/>
            <person name="Yu O."/>
        </authorList>
    </citation>
    <scope>NUCLEOTIDE SEQUENCE [MRNA]</scope>
    <scope>FUNCTION</scope>
    <scope>INDUCTION</scope>
    <scope>TISSUE SPECIFICITY</scope>
</reference>
<organism>
    <name type="scientific">Glycine max</name>
    <name type="common">Soybean</name>
    <name type="synonym">Glycine hispida</name>
    <dbReference type="NCBI Taxonomy" id="3847"/>
    <lineage>
        <taxon>Eukaryota</taxon>
        <taxon>Viridiplantae</taxon>
        <taxon>Streptophyta</taxon>
        <taxon>Embryophyta</taxon>
        <taxon>Tracheophyta</taxon>
        <taxon>Spermatophyta</taxon>
        <taxon>Magnoliopsida</taxon>
        <taxon>eudicotyledons</taxon>
        <taxon>Gunneridae</taxon>
        <taxon>Pentapetalae</taxon>
        <taxon>rosids</taxon>
        <taxon>fabids</taxon>
        <taxon>Fabales</taxon>
        <taxon>Fabaceae</taxon>
        <taxon>Papilionoideae</taxon>
        <taxon>50 kb inversion clade</taxon>
        <taxon>NPAAA clade</taxon>
        <taxon>indigoferoid/millettioid clade</taxon>
        <taxon>Phaseoleae</taxon>
        <taxon>Glycine</taxon>
        <taxon>Glycine subgen. Soja</taxon>
    </lineage>
</organism>